<name>PIP_XYLFT</name>
<proteinExistence type="inferred from homology"/>
<reference key="1">
    <citation type="journal article" date="2003" name="J. Bacteriol.">
        <title>Comparative analyses of the complete genome sequences of Pierce's disease and citrus variegated chlorosis strains of Xylella fastidiosa.</title>
        <authorList>
            <person name="Van Sluys M.A."/>
            <person name="de Oliveira M.C."/>
            <person name="Monteiro-Vitorello C.B."/>
            <person name="Miyaki C.Y."/>
            <person name="Furlan L.R."/>
            <person name="Camargo L.E.A."/>
            <person name="da Silva A.C.R."/>
            <person name="Moon D.H."/>
            <person name="Takita M.A."/>
            <person name="Lemos E.G.M."/>
            <person name="Machado M.A."/>
            <person name="Ferro M.I.T."/>
            <person name="da Silva F.R."/>
            <person name="Goldman M.H.S."/>
            <person name="Goldman G.H."/>
            <person name="Lemos M.V.F."/>
            <person name="El-Dorry H."/>
            <person name="Tsai S.M."/>
            <person name="Carrer H."/>
            <person name="Carraro D.M."/>
            <person name="de Oliveira R.C."/>
            <person name="Nunes L.R."/>
            <person name="Siqueira W.J."/>
            <person name="Coutinho L.L."/>
            <person name="Kimura E.T."/>
            <person name="Ferro E.S."/>
            <person name="Harakava R."/>
            <person name="Kuramae E.E."/>
            <person name="Marino C.L."/>
            <person name="Giglioti E."/>
            <person name="Abreu I.L."/>
            <person name="Alves L.M.C."/>
            <person name="do Amaral A.M."/>
            <person name="Baia G.S."/>
            <person name="Blanco S.R."/>
            <person name="Brito M.S."/>
            <person name="Cannavan F.S."/>
            <person name="Celestino A.V."/>
            <person name="da Cunha A.F."/>
            <person name="Fenille R.C."/>
            <person name="Ferro J.A."/>
            <person name="Formighieri E.F."/>
            <person name="Kishi L.T."/>
            <person name="Leoni S.G."/>
            <person name="Oliveira A.R."/>
            <person name="Rosa V.E. Jr."/>
            <person name="Sassaki F.T."/>
            <person name="Sena J.A.D."/>
            <person name="de Souza A.A."/>
            <person name="Truffi D."/>
            <person name="Tsukumo F."/>
            <person name="Yanai G.M."/>
            <person name="Zaros L.G."/>
            <person name="Civerolo E.L."/>
            <person name="Simpson A.J.G."/>
            <person name="Almeida N.F. Jr."/>
            <person name="Setubal J.C."/>
            <person name="Kitajima J.P."/>
        </authorList>
    </citation>
    <scope>NUCLEOTIDE SEQUENCE [LARGE SCALE GENOMIC DNA]</scope>
    <source>
        <strain>Temecula1 / ATCC 700964</strain>
    </source>
</reference>
<sequence length="313" mass="35519">MRTLYPEVTPFDHGMLCVDDSHRLYYEQCGNPHGKPVVILHGGPGGGCNDKMRRFHDPDKYRIVLFDQRGAGRSMPHANLTNNTTWDLVADIEKLRVALGITRWQVFGGSWGSTLALAYAQTHPEQTTELVLRGIFMLRRWELEWFYQEGASRLFPDAWDRYIAAIPPVERHDLISAFHRRLTSDDEATRLAAAQAWSLWEGATSCLYMDQDFIASHENPHFALAFARIENHYFVNGGFFEVEDQLLRDAQRIANIPGVIVHGRYDVVCPLQNAWDLHKAWPKASLKITPGAGHSAFEPQNIDALVCATDSFV</sequence>
<evidence type="ECO:0000250" key="1"/>
<evidence type="ECO:0000255" key="2"/>
<evidence type="ECO:0000305" key="3"/>
<comment type="function">
    <text evidence="1">Specifically catalyzes the removal of N-terminal proline residues from peptides.</text>
</comment>
<comment type="catalytic activity">
    <reaction>
        <text>Release of N-terminal proline from a peptide.</text>
        <dbReference type="EC" id="3.4.11.5"/>
    </reaction>
</comment>
<comment type="subcellular location">
    <subcellularLocation>
        <location evidence="1">Cytoplasm</location>
    </subcellularLocation>
</comment>
<comment type="similarity">
    <text evidence="3">Belongs to the peptidase S33 family.</text>
</comment>
<keyword id="KW-0031">Aminopeptidase</keyword>
<keyword id="KW-0963">Cytoplasm</keyword>
<keyword id="KW-0378">Hydrolase</keyword>
<keyword id="KW-0645">Protease</keyword>
<keyword id="KW-1185">Reference proteome</keyword>
<dbReference type="EC" id="3.4.11.5"/>
<dbReference type="EMBL" id="AE009442">
    <property type="protein sequence ID" value="AAO28596.1"/>
    <property type="molecule type" value="Genomic_DNA"/>
</dbReference>
<dbReference type="RefSeq" id="WP_004088975.1">
    <property type="nucleotide sequence ID" value="NC_004556.1"/>
</dbReference>
<dbReference type="SMR" id="Q87DF8"/>
<dbReference type="ESTHER" id="xylfa-pip">
    <property type="family name" value="Proline_iminopeptidase"/>
</dbReference>
<dbReference type="MEROPS" id="S33.001"/>
<dbReference type="GeneID" id="93904507"/>
<dbReference type="KEGG" id="xft:PD_0727"/>
<dbReference type="HOGENOM" id="CLU_043739_2_2_6"/>
<dbReference type="Proteomes" id="UP000002516">
    <property type="component" value="Chromosome"/>
</dbReference>
<dbReference type="GO" id="GO:0005737">
    <property type="term" value="C:cytoplasm"/>
    <property type="evidence" value="ECO:0007669"/>
    <property type="project" value="UniProtKB-SubCell"/>
</dbReference>
<dbReference type="GO" id="GO:0004177">
    <property type="term" value="F:aminopeptidase activity"/>
    <property type="evidence" value="ECO:0007669"/>
    <property type="project" value="UniProtKB-KW"/>
</dbReference>
<dbReference type="GO" id="GO:0006508">
    <property type="term" value="P:proteolysis"/>
    <property type="evidence" value="ECO:0007669"/>
    <property type="project" value="UniProtKB-KW"/>
</dbReference>
<dbReference type="Gene3D" id="3.40.50.1820">
    <property type="entry name" value="alpha/beta hydrolase"/>
    <property type="match status" value="1"/>
</dbReference>
<dbReference type="InterPro" id="IPR000073">
    <property type="entry name" value="AB_hydrolase_1"/>
</dbReference>
<dbReference type="InterPro" id="IPR029058">
    <property type="entry name" value="AB_hydrolase_fold"/>
</dbReference>
<dbReference type="InterPro" id="IPR002410">
    <property type="entry name" value="Peptidase_S33"/>
</dbReference>
<dbReference type="InterPro" id="IPR005944">
    <property type="entry name" value="Pro_iminopeptidase"/>
</dbReference>
<dbReference type="NCBIfam" id="TIGR01249">
    <property type="entry name" value="pro_imino_pep_1"/>
    <property type="match status" value="1"/>
</dbReference>
<dbReference type="PANTHER" id="PTHR43722">
    <property type="entry name" value="PROLINE IMINOPEPTIDASE"/>
    <property type="match status" value="1"/>
</dbReference>
<dbReference type="PANTHER" id="PTHR43722:SF1">
    <property type="entry name" value="PROLINE IMINOPEPTIDASE"/>
    <property type="match status" value="1"/>
</dbReference>
<dbReference type="Pfam" id="PF00561">
    <property type="entry name" value="Abhydrolase_1"/>
    <property type="match status" value="1"/>
</dbReference>
<dbReference type="PIRSF" id="PIRSF006431">
    <property type="entry name" value="Pept_S33"/>
    <property type="match status" value="1"/>
</dbReference>
<dbReference type="PRINTS" id="PR00111">
    <property type="entry name" value="ABHYDROLASE"/>
</dbReference>
<dbReference type="PRINTS" id="PR00793">
    <property type="entry name" value="PROAMNOPTASE"/>
</dbReference>
<dbReference type="SUPFAM" id="SSF53474">
    <property type="entry name" value="alpha/beta-Hydrolases"/>
    <property type="match status" value="1"/>
</dbReference>
<organism>
    <name type="scientific">Xylella fastidiosa (strain Temecula1 / ATCC 700964)</name>
    <dbReference type="NCBI Taxonomy" id="183190"/>
    <lineage>
        <taxon>Bacteria</taxon>
        <taxon>Pseudomonadati</taxon>
        <taxon>Pseudomonadota</taxon>
        <taxon>Gammaproteobacteria</taxon>
        <taxon>Lysobacterales</taxon>
        <taxon>Lysobacteraceae</taxon>
        <taxon>Xylella</taxon>
    </lineage>
</organism>
<feature type="chain" id="PRO_0000080849" description="Proline iminopeptidase">
    <location>
        <begin position="1"/>
        <end position="313"/>
    </location>
</feature>
<feature type="domain" description="AB hydrolase-1" evidence="2">
    <location>
        <begin position="35"/>
        <end position="298"/>
    </location>
</feature>
<feature type="active site" description="Nucleophile" evidence="1">
    <location>
        <position position="110"/>
    </location>
</feature>
<feature type="active site" evidence="1">
    <location>
        <position position="266"/>
    </location>
</feature>
<feature type="active site" description="Proton donor" evidence="1">
    <location>
        <position position="294"/>
    </location>
</feature>
<protein>
    <recommendedName>
        <fullName>Proline iminopeptidase</fullName>
        <shortName>PIP</shortName>
        <ecNumber>3.4.11.5</ecNumber>
    </recommendedName>
    <alternativeName>
        <fullName>Prolyl aminopeptidase</fullName>
        <shortName>PAP</shortName>
    </alternativeName>
</protein>
<accession>Q87DF8</accession>
<gene>
    <name type="primary">pip</name>
    <name type="ordered locus">PD_0727</name>
</gene>